<dbReference type="EC" id="1.14.-.-" evidence="2"/>
<dbReference type="EMBL" id="AB469193">
    <property type="protein sequence ID" value="BAJ16472.1"/>
    <property type="molecule type" value="Genomic_DNA"/>
</dbReference>
<dbReference type="PDB" id="5Y1I">
    <property type="method" value="X-ray"/>
    <property type="resolution" value="2.00 A"/>
    <property type="chains" value="A/B=16-414"/>
</dbReference>
<dbReference type="PDBsum" id="5Y1I"/>
<dbReference type="SMR" id="E0D207"/>
<dbReference type="GO" id="GO:0020037">
    <property type="term" value="F:heme binding"/>
    <property type="evidence" value="ECO:0007669"/>
    <property type="project" value="InterPro"/>
</dbReference>
<dbReference type="GO" id="GO:0005506">
    <property type="term" value="F:iron ion binding"/>
    <property type="evidence" value="ECO:0007669"/>
    <property type="project" value="InterPro"/>
</dbReference>
<dbReference type="GO" id="GO:0004497">
    <property type="term" value="F:monooxygenase activity"/>
    <property type="evidence" value="ECO:0007669"/>
    <property type="project" value="UniProtKB-KW"/>
</dbReference>
<dbReference type="GO" id="GO:0016705">
    <property type="term" value="F:oxidoreductase activity, acting on paired donors, with incorporation or reduction of molecular oxygen"/>
    <property type="evidence" value="ECO:0007669"/>
    <property type="project" value="InterPro"/>
</dbReference>
<dbReference type="GO" id="GO:0017000">
    <property type="term" value="P:antibiotic biosynthetic process"/>
    <property type="evidence" value="ECO:0007669"/>
    <property type="project" value="UniProtKB-KW"/>
</dbReference>
<dbReference type="CDD" id="cd11030">
    <property type="entry name" value="CYP105-like"/>
    <property type="match status" value="1"/>
</dbReference>
<dbReference type="FunFam" id="1.10.630.10:FF:000018">
    <property type="entry name" value="Cytochrome P450 monooxygenase"/>
    <property type="match status" value="1"/>
</dbReference>
<dbReference type="Gene3D" id="1.10.630.10">
    <property type="entry name" value="Cytochrome P450"/>
    <property type="match status" value="1"/>
</dbReference>
<dbReference type="InterPro" id="IPR001128">
    <property type="entry name" value="Cyt_P450"/>
</dbReference>
<dbReference type="InterPro" id="IPR002397">
    <property type="entry name" value="Cyt_P450_B"/>
</dbReference>
<dbReference type="InterPro" id="IPR017972">
    <property type="entry name" value="Cyt_P450_CS"/>
</dbReference>
<dbReference type="InterPro" id="IPR036396">
    <property type="entry name" value="Cyt_P450_sf"/>
</dbReference>
<dbReference type="PANTHER" id="PTHR46696:SF1">
    <property type="entry name" value="CYTOCHROME P450 YJIB-RELATED"/>
    <property type="match status" value="1"/>
</dbReference>
<dbReference type="PANTHER" id="PTHR46696">
    <property type="entry name" value="P450, PUTATIVE (EUROFUNG)-RELATED"/>
    <property type="match status" value="1"/>
</dbReference>
<dbReference type="Pfam" id="PF00067">
    <property type="entry name" value="p450"/>
    <property type="match status" value="1"/>
</dbReference>
<dbReference type="PRINTS" id="PR00359">
    <property type="entry name" value="BP450"/>
</dbReference>
<dbReference type="PRINTS" id="PR00385">
    <property type="entry name" value="P450"/>
</dbReference>
<dbReference type="SUPFAM" id="SSF48264">
    <property type="entry name" value="Cytochrome P450"/>
    <property type="match status" value="1"/>
</dbReference>
<dbReference type="PROSITE" id="PS00086">
    <property type="entry name" value="CYTOCHROME_P450"/>
    <property type="match status" value="1"/>
</dbReference>
<organism>
    <name type="scientific">Streptomyces halstedii</name>
    <dbReference type="NCBI Taxonomy" id="1944"/>
    <lineage>
        <taxon>Bacteria</taxon>
        <taxon>Bacillati</taxon>
        <taxon>Actinomycetota</taxon>
        <taxon>Actinomycetes</taxon>
        <taxon>Kitasatosporales</taxon>
        <taxon>Streptomycetaceae</taxon>
        <taxon>Streptomyces</taxon>
    </lineage>
</organism>
<sequence length="414" mass="45533">MTDTTLVEAGDPAEDAPEWPMKRDTGCPFDPPPGVRKLLAEKPLSRARIWDGSTPWVVTRHADQRALLSDPRVSHDGLRDGYPHISADFKFLSMAQPSFAGQDDPEHGRIRRMVTLPFTARRIEAMRPAIQKITDELIDGMLAGPKPVDLVEALALPVPVRVICEMLGVPYEDREFLQQNNNAMIYRDTAQGDAQKAAIAQAMYLKELVGTKLGDRGDDILSDLAVQVEAGEITQDDAAGIGMMLLGAGHETTANMIALGTLALLENPEQLAEVRDSDDPKVIVNTVEELLRYLTIAQDTVRRIAAEDIEIGGVVIKAGEGIVFPLNAANWDPDLYPEAPDRLDIHRANARRHLAFGYGVHQCLGATLARVELQIVYSTLLRRIPTLALAGTLDEIPFKHDQIAHGVYELPVTW</sequence>
<protein>
    <recommendedName>
        <fullName>Cytochrome P450 GfsF</fullName>
        <ecNumber evidence="2">1.14.-.-</ecNumber>
    </recommendedName>
    <alternativeName>
        <fullName evidence="7">P450 monooxygenase GfsF</fullName>
    </alternativeName>
</protein>
<reference evidence="9" key="1">
    <citation type="journal article" date="2010" name="ChemBioChem">
        <title>Cloning and characterization of the biosynthetic gene cluster of 16-membered macrolide antibiotic FD-891: involvement of a dual functional cytochrome P450 monooxygenase catalyzing epoxidation and hydroxylation.</title>
        <authorList>
            <person name="Kudo F."/>
            <person name="Motegi A."/>
            <person name="Mizoue K."/>
            <person name="Eguchi T."/>
        </authorList>
    </citation>
    <scope>NUCLEOTIDE SEQUENCE [GENOMIC DNA]</scope>
    <scope>FUNCTION</scope>
    <scope>CATALYTIC ACTIVITY</scope>
    <scope>PATHWAY</scope>
    <scope>DISRUPTION PHENOTYPE</scope>
    <source>
        <strain>A-8890</strain>
    </source>
</reference>
<reference key="2">
    <citation type="journal article" date="2010" name="ChemBioChem">
        <authorList>
            <person name="Kudo F."/>
            <person name="Motegi A."/>
            <person name="Mizoue K."/>
            <person name="Eguchi T."/>
        </authorList>
    </citation>
    <scope>ERRATUM OF PUBMED:20589823</scope>
</reference>
<reference key="3">
    <citation type="journal article" date="1994" name="J. Antibiot.">
        <title>Isolation and characterization of new 18-membered macrolides FD-891 and FD-892.</title>
        <authorList>
            <person name="Seki-Asano M."/>
            <person name="Okazaki T."/>
            <person name="Yamagishi M."/>
            <person name="Sakai N."/>
            <person name="Hanada K."/>
            <person name="Mizoue K."/>
        </authorList>
    </citation>
    <scope>ANTIBIOTIC ISOLATION AND ACTIVITY CHARACTERIZATION AGAINST HUMAN CELL LINES</scope>
    <source>
        <strain>A-8890</strain>
    </source>
</reference>
<reference key="4">
    <citation type="journal article" date="2005" name="J. Gen. Plant Pathol.">
        <title>Phytotoxin produced by Streptomyces sp. causing potato russet scab in Japan.</title>
        <authorList>
            <person name="Natsume M."/>
            <person name="Komiya M."/>
            <person name="Koyanagi F."/>
            <person name="Tashiro N."/>
            <person name="Kawaide H."/>
            <person name="Abe H."/>
        </authorList>
    </citation>
    <scope>ANTIBIOTIC ISOLATION AND ACTIVITY CHARACTERIZATION AGAINST PLANTS</scope>
</reference>
<reference key="5">
    <citation type="journal article" date="2016" name="ChemBioChem">
        <title>Parallel Post-Polyketide Synthase Modification Mechanism Involved in FD-891 Biosynthesis in Streptomyces graminofaciens A-8890.</title>
        <authorList>
            <person name="Kudo F."/>
            <person name="Kawamura K."/>
            <person name="Furuya T."/>
            <person name="Yamanishi H."/>
            <person name="Motegi A."/>
            <person name="Komatsubara A."/>
            <person name="Numakura M."/>
            <person name="Miyanaga A."/>
            <person name="Eguchi T."/>
        </authorList>
    </citation>
    <scope>FUNCTION</scope>
    <scope>CATALYTIC ACTIVITY</scope>
    <scope>PATHWAY</scope>
    <scope>DISRUPTION PHENOTYPE</scope>
    <source>
        <strain>A-8890</strain>
    </source>
</reference>
<reference evidence="10" key="6">
    <citation type="journal article" date="2017" name="ChemBioChem">
        <title>Substrate Recognition by a Dual-Function P450 Monooxygenase GfsF Involved in FD-891 Biosynthesis.</title>
        <authorList>
            <person name="Miyanaga A."/>
            <person name="Takayanagi R."/>
            <person name="Furuya T."/>
            <person name="Kawamata A."/>
            <person name="Itagaki T."/>
            <person name="Iwabuchi Y."/>
            <person name="Kanoh N."/>
            <person name="Kudo F."/>
            <person name="Eguchi T."/>
        </authorList>
    </citation>
    <scope>X-RAY CRYSTALLOGRAPHY (2.00 ANGSTROMS) OF 16-414 IN COMPLEX WITH HEME B</scope>
    <scope>FUNCTION</scope>
    <scope>SUBUNIT</scope>
    <scope>MUTAGENESIS OF PHE-89 AND THR-300</scope>
</reference>
<evidence type="ECO:0000256" key="1">
    <source>
        <dbReference type="SAM" id="MobiDB-lite"/>
    </source>
</evidence>
<evidence type="ECO:0000269" key="2">
    <source>
    </source>
</evidence>
<evidence type="ECO:0000269" key="3">
    <source>
    </source>
</evidence>
<evidence type="ECO:0000269" key="4">
    <source>
    </source>
</evidence>
<evidence type="ECO:0000269" key="5">
    <source>
    </source>
</evidence>
<evidence type="ECO:0000269" key="6">
    <source ref="4"/>
</evidence>
<evidence type="ECO:0000303" key="7">
    <source>
    </source>
</evidence>
<evidence type="ECO:0000305" key="8"/>
<evidence type="ECO:0000312" key="9">
    <source>
        <dbReference type="EMBL" id="BAJ16472.1"/>
    </source>
</evidence>
<evidence type="ECO:0007744" key="10">
    <source>
        <dbReference type="PDB" id="5Y1I"/>
    </source>
</evidence>
<evidence type="ECO:0007829" key="11">
    <source>
        <dbReference type="PDB" id="5Y1I"/>
    </source>
</evidence>
<gene>
    <name evidence="7" type="primary">gfsF</name>
</gene>
<name>GFSF_STRHA</name>
<feature type="chain" id="PRO_0000461668" description="Cytochrome P450 GfsF">
    <location>
        <begin position="1"/>
        <end position="414"/>
    </location>
</feature>
<feature type="region of interest" description="Disordered" evidence="1">
    <location>
        <begin position="1"/>
        <end position="32"/>
    </location>
</feature>
<feature type="binding site" evidence="4 10">
    <location>
        <position position="75"/>
    </location>
    <ligand>
        <name>heme b</name>
        <dbReference type="ChEBI" id="CHEBI:60344"/>
    </ligand>
</feature>
<feature type="binding site" evidence="4 10">
    <location>
        <position position="107"/>
    </location>
    <ligand>
        <name>heme b</name>
        <dbReference type="ChEBI" id="CHEBI:60344"/>
    </ligand>
</feature>
<feature type="binding site" evidence="4 10">
    <location>
        <position position="111"/>
    </location>
    <ligand>
        <name>heme b</name>
        <dbReference type="ChEBI" id="CHEBI:60344"/>
    </ligand>
</feature>
<feature type="binding site" evidence="4 10">
    <location>
        <position position="303"/>
    </location>
    <ligand>
        <name>heme b</name>
        <dbReference type="ChEBI" id="CHEBI:60344"/>
    </ligand>
</feature>
<feature type="binding site" evidence="4 10">
    <location>
        <position position="361"/>
    </location>
    <ligand>
        <name>heme b</name>
        <dbReference type="ChEBI" id="CHEBI:60344"/>
    </ligand>
</feature>
<feature type="binding site" evidence="4 10">
    <location>
        <position position="363"/>
    </location>
    <ligand>
        <name>heme b</name>
        <dbReference type="ChEBI" id="CHEBI:60344"/>
    </ligand>
    <ligandPart>
        <name>Fe</name>
        <dbReference type="ChEBI" id="CHEBI:18248"/>
        <note>axial binding residue</note>
    </ligandPart>
</feature>
<feature type="mutagenesis site" description="Very low epoxidation, no hydroxylation activity on FD-892." evidence="4">
    <original>F</original>
    <variation>A</variation>
    <location>
        <position position="89"/>
    </location>
</feature>
<feature type="mutagenesis site" description="93% epoxidation, 13% hydroxylation activity on FD-892." evidence="4">
    <original>T</original>
    <variation>A</variation>
    <location>
        <position position="300"/>
    </location>
</feature>
<feature type="mutagenesis site" description="Full epoxidation activity, no hydroxylation activity on FD-892." evidence="4">
    <original>T</original>
    <variation>V</variation>
    <location>
        <position position="300"/>
    </location>
</feature>
<feature type="helix" evidence="11">
    <location>
        <begin position="33"/>
        <end position="41"/>
    </location>
</feature>
<feature type="strand" evidence="11">
    <location>
        <begin position="43"/>
        <end position="46"/>
    </location>
</feature>
<feature type="strand" evidence="11">
    <location>
        <begin position="56"/>
        <end position="58"/>
    </location>
</feature>
<feature type="helix" evidence="11">
    <location>
        <begin position="61"/>
        <end position="68"/>
    </location>
</feature>
<feature type="helix" evidence="11">
    <location>
        <begin position="87"/>
        <end position="92"/>
    </location>
</feature>
<feature type="helix" evidence="11">
    <location>
        <begin position="106"/>
        <end position="112"/>
    </location>
</feature>
<feature type="helix" evidence="11">
    <location>
        <begin position="116"/>
        <end position="118"/>
    </location>
</feature>
<feature type="helix" evidence="11">
    <location>
        <begin position="120"/>
        <end position="125"/>
    </location>
</feature>
<feature type="helix" evidence="11">
    <location>
        <begin position="127"/>
        <end position="143"/>
    </location>
</feature>
<feature type="strand" evidence="11">
    <location>
        <begin position="146"/>
        <end position="149"/>
    </location>
</feature>
<feature type="helix" evidence="11">
    <location>
        <begin position="150"/>
        <end position="153"/>
    </location>
</feature>
<feature type="turn" evidence="11">
    <location>
        <begin position="154"/>
        <end position="156"/>
    </location>
</feature>
<feature type="helix" evidence="11">
    <location>
        <begin position="157"/>
        <end position="167"/>
    </location>
</feature>
<feature type="helix" evidence="11">
    <location>
        <begin position="171"/>
        <end position="173"/>
    </location>
</feature>
<feature type="helix" evidence="11">
    <location>
        <begin position="174"/>
        <end position="185"/>
    </location>
</feature>
<feature type="helix" evidence="11">
    <location>
        <begin position="191"/>
        <end position="212"/>
    </location>
</feature>
<feature type="helix" evidence="11">
    <location>
        <begin position="220"/>
        <end position="229"/>
    </location>
</feature>
<feature type="helix" evidence="11">
    <location>
        <begin position="235"/>
        <end position="248"/>
    </location>
</feature>
<feature type="helix" evidence="11">
    <location>
        <begin position="251"/>
        <end position="266"/>
    </location>
</feature>
<feature type="helix" evidence="11">
    <location>
        <begin position="268"/>
        <end position="276"/>
    </location>
</feature>
<feature type="helix" evidence="11">
    <location>
        <begin position="281"/>
        <end position="294"/>
    </location>
</feature>
<feature type="turn" evidence="11">
    <location>
        <begin position="296"/>
        <end position="299"/>
    </location>
</feature>
<feature type="strand" evidence="11">
    <location>
        <begin position="301"/>
        <end position="307"/>
    </location>
</feature>
<feature type="strand" evidence="11">
    <location>
        <begin position="309"/>
        <end position="311"/>
    </location>
</feature>
<feature type="strand" evidence="11">
    <location>
        <begin position="314"/>
        <end position="316"/>
    </location>
</feature>
<feature type="strand" evidence="11">
    <location>
        <begin position="321"/>
        <end position="324"/>
    </location>
</feature>
<feature type="helix" evidence="11">
    <location>
        <begin position="326"/>
        <end position="329"/>
    </location>
</feature>
<feature type="turn" evidence="11">
    <location>
        <begin position="333"/>
        <end position="335"/>
    </location>
</feature>
<feature type="helix" evidence="11">
    <location>
        <begin position="350"/>
        <end position="352"/>
    </location>
</feature>
<feature type="helix" evidence="11">
    <location>
        <begin position="359"/>
        <end position="361"/>
    </location>
</feature>
<feature type="helix" evidence="11">
    <location>
        <begin position="366"/>
        <end position="383"/>
    </location>
</feature>
<feature type="strand" evidence="11">
    <location>
        <begin position="388"/>
        <end position="391"/>
    </location>
</feature>
<feature type="helix" evidence="11">
    <location>
        <begin position="393"/>
        <end position="395"/>
    </location>
</feature>
<feature type="strand" evidence="11">
    <location>
        <begin position="402"/>
        <end position="404"/>
    </location>
</feature>
<feature type="strand" evidence="11">
    <location>
        <begin position="411"/>
        <end position="413"/>
    </location>
</feature>
<keyword id="KW-0002">3D-structure</keyword>
<keyword id="KW-0045">Antibiotic biosynthesis</keyword>
<keyword id="KW-0349">Heme</keyword>
<keyword id="KW-0408">Iron</keyword>
<keyword id="KW-0479">Metal-binding</keyword>
<keyword id="KW-0503">Monooxygenase</keyword>
<keyword id="KW-0560">Oxidoreductase</keyword>
<proteinExistence type="evidence at protein level"/>
<comment type="function">
    <text evidence="2 3 4">Involved in the synthesis of the 16-membered macrolide antibiotics FD-891 and FD-892 (PubMed:20589823, PubMed:26630077, PubMed:28869713). Consecutively catalyzes epoxidation of C8-C9 and then hydroxylation at C10 to convert 25-O-methyl-FD-892 to FD-891 (PubMed:20589823). Consecutively catalyzes epoxidation of C8-C9 and then hydroxylation at C10 to convert 8,9-epoxy-FD-892 to 25-O-demethyl-FD-891 as well as converting 25-oxo-FD-892 to 8,9-epoxy-25-oxo-FD-892 and 8,9-epoxy-10-hydroxy-25-oxo-FD-892 (PubMed:26630077). In vitro is furnished with P.putida putidaredoxin and putidaredoxin reductase to provide the required two-electron reduction (PubMed:20589823, PubMed:26630077, PubMed:28869713).</text>
</comment>
<comment type="cofactor">
    <cofactor evidence="4 10">
        <name>heme b</name>
        <dbReference type="ChEBI" id="CHEBI:60344"/>
    </cofactor>
</comment>
<comment type="pathway">
    <text evidence="2 3">Antibiotic biosynthesis.</text>
</comment>
<comment type="subunit">
    <text evidence="4">Monomer.</text>
</comment>
<comment type="disruption phenotype">
    <text evidence="2 3">No longer produces the 16-membered macrolide antibiotics FD-891 or FD-892 and instead makes 25-O-methyl-FD-892 (PubMed:20589823). Double gfsF-gfsG deletions make a diastereomeric mxiture of 25-oxo-FD-892 (PubMed:26630077).</text>
</comment>
<comment type="miscellaneous">
    <text evidence="5 6">The macrolide antibiotics FD-891 and FD-892 induce morphological changes of human promyelocytic leukemia (HL-60) cells and have cytocidal activity against tumor cell lines in vitro (PubMed:8002384). FD-891 produced by Streptomyces sp. MAFF 225003 and MAFF 225006 inhibits growth of rice and alfalfa seedlings and may cause russet scab in potatoes (Ref.4).</text>
</comment>
<comment type="similarity">
    <text evidence="8">Belongs to the cytochrome P450 family.</text>
</comment>
<accession>E0D207</accession>